<gene>
    <name evidence="1" type="primary">alaS</name>
    <name type="ordered locus">Mmc1_0013</name>
</gene>
<proteinExistence type="inferred from homology"/>
<name>SYA_MAGMM</name>
<accession>A0L3J9</accession>
<evidence type="ECO:0000255" key="1">
    <source>
        <dbReference type="HAMAP-Rule" id="MF_00036"/>
    </source>
</evidence>
<dbReference type="EC" id="6.1.1.7" evidence="1"/>
<dbReference type="EMBL" id="CP000471">
    <property type="protein sequence ID" value="ABK42542.1"/>
    <property type="molecule type" value="Genomic_DNA"/>
</dbReference>
<dbReference type="RefSeq" id="WP_011711716.1">
    <property type="nucleotide sequence ID" value="NC_008576.1"/>
</dbReference>
<dbReference type="SMR" id="A0L3J9"/>
<dbReference type="STRING" id="156889.Mmc1_0013"/>
<dbReference type="KEGG" id="mgm:Mmc1_0013"/>
<dbReference type="eggNOG" id="COG0013">
    <property type="taxonomic scope" value="Bacteria"/>
</dbReference>
<dbReference type="HOGENOM" id="CLU_004485_1_1_5"/>
<dbReference type="OrthoDB" id="9803884at2"/>
<dbReference type="Proteomes" id="UP000002586">
    <property type="component" value="Chromosome"/>
</dbReference>
<dbReference type="GO" id="GO:0005829">
    <property type="term" value="C:cytosol"/>
    <property type="evidence" value="ECO:0007669"/>
    <property type="project" value="TreeGrafter"/>
</dbReference>
<dbReference type="GO" id="GO:0004813">
    <property type="term" value="F:alanine-tRNA ligase activity"/>
    <property type="evidence" value="ECO:0007669"/>
    <property type="project" value="UniProtKB-UniRule"/>
</dbReference>
<dbReference type="GO" id="GO:0002161">
    <property type="term" value="F:aminoacyl-tRNA deacylase activity"/>
    <property type="evidence" value="ECO:0007669"/>
    <property type="project" value="TreeGrafter"/>
</dbReference>
<dbReference type="GO" id="GO:0005524">
    <property type="term" value="F:ATP binding"/>
    <property type="evidence" value="ECO:0007669"/>
    <property type="project" value="UniProtKB-UniRule"/>
</dbReference>
<dbReference type="GO" id="GO:0000049">
    <property type="term" value="F:tRNA binding"/>
    <property type="evidence" value="ECO:0007669"/>
    <property type="project" value="UniProtKB-KW"/>
</dbReference>
<dbReference type="GO" id="GO:0008270">
    <property type="term" value="F:zinc ion binding"/>
    <property type="evidence" value="ECO:0007669"/>
    <property type="project" value="UniProtKB-UniRule"/>
</dbReference>
<dbReference type="GO" id="GO:0006419">
    <property type="term" value="P:alanyl-tRNA aminoacylation"/>
    <property type="evidence" value="ECO:0007669"/>
    <property type="project" value="UniProtKB-UniRule"/>
</dbReference>
<dbReference type="GO" id="GO:0045892">
    <property type="term" value="P:negative regulation of DNA-templated transcription"/>
    <property type="evidence" value="ECO:0007669"/>
    <property type="project" value="TreeGrafter"/>
</dbReference>
<dbReference type="CDD" id="cd00673">
    <property type="entry name" value="AlaRS_core"/>
    <property type="match status" value="1"/>
</dbReference>
<dbReference type="FunFam" id="2.40.30.130:FF:000001">
    <property type="entry name" value="Alanine--tRNA ligase"/>
    <property type="match status" value="1"/>
</dbReference>
<dbReference type="FunFam" id="3.10.310.40:FF:000001">
    <property type="entry name" value="Alanine--tRNA ligase"/>
    <property type="match status" value="1"/>
</dbReference>
<dbReference type="FunFam" id="3.30.54.20:FF:000001">
    <property type="entry name" value="Alanine--tRNA ligase"/>
    <property type="match status" value="1"/>
</dbReference>
<dbReference type="FunFam" id="3.30.930.10:FF:000004">
    <property type="entry name" value="Alanine--tRNA ligase"/>
    <property type="match status" value="1"/>
</dbReference>
<dbReference type="FunFam" id="3.30.980.10:FF:000004">
    <property type="entry name" value="Alanine--tRNA ligase, cytoplasmic"/>
    <property type="match status" value="1"/>
</dbReference>
<dbReference type="Gene3D" id="2.40.30.130">
    <property type="match status" value="1"/>
</dbReference>
<dbReference type="Gene3D" id="3.10.310.40">
    <property type="match status" value="1"/>
</dbReference>
<dbReference type="Gene3D" id="3.30.54.20">
    <property type="match status" value="1"/>
</dbReference>
<dbReference type="Gene3D" id="6.10.250.550">
    <property type="match status" value="1"/>
</dbReference>
<dbReference type="Gene3D" id="3.30.930.10">
    <property type="entry name" value="Bira Bifunctional Protein, Domain 2"/>
    <property type="match status" value="1"/>
</dbReference>
<dbReference type="Gene3D" id="3.30.980.10">
    <property type="entry name" value="Threonyl-trna Synthetase, Chain A, domain 2"/>
    <property type="match status" value="1"/>
</dbReference>
<dbReference type="HAMAP" id="MF_00036_B">
    <property type="entry name" value="Ala_tRNA_synth_B"/>
    <property type="match status" value="1"/>
</dbReference>
<dbReference type="InterPro" id="IPR045864">
    <property type="entry name" value="aa-tRNA-synth_II/BPL/LPL"/>
</dbReference>
<dbReference type="InterPro" id="IPR002318">
    <property type="entry name" value="Ala-tRNA-lgiase_IIc"/>
</dbReference>
<dbReference type="InterPro" id="IPR018162">
    <property type="entry name" value="Ala-tRNA-ligase_IIc_anticod-bd"/>
</dbReference>
<dbReference type="InterPro" id="IPR018165">
    <property type="entry name" value="Ala-tRNA-synth_IIc_core"/>
</dbReference>
<dbReference type="InterPro" id="IPR018164">
    <property type="entry name" value="Ala-tRNA-synth_IIc_N"/>
</dbReference>
<dbReference type="InterPro" id="IPR050058">
    <property type="entry name" value="Ala-tRNA_ligase"/>
</dbReference>
<dbReference type="InterPro" id="IPR023033">
    <property type="entry name" value="Ala_tRNA_ligase_euk/bac"/>
</dbReference>
<dbReference type="InterPro" id="IPR003156">
    <property type="entry name" value="DHHA1_dom"/>
</dbReference>
<dbReference type="InterPro" id="IPR018163">
    <property type="entry name" value="Thr/Ala-tRNA-synth_IIc_edit"/>
</dbReference>
<dbReference type="InterPro" id="IPR009000">
    <property type="entry name" value="Transl_B-barrel_sf"/>
</dbReference>
<dbReference type="InterPro" id="IPR012947">
    <property type="entry name" value="tRNA_SAD"/>
</dbReference>
<dbReference type="NCBIfam" id="TIGR00344">
    <property type="entry name" value="alaS"/>
    <property type="match status" value="1"/>
</dbReference>
<dbReference type="PANTHER" id="PTHR11777:SF9">
    <property type="entry name" value="ALANINE--TRNA LIGASE, CYTOPLASMIC"/>
    <property type="match status" value="1"/>
</dbReference>
<dbReference type="PANTHER" id="PTHR11777">
    <property type="entry name" value="ALANYL-TRNA SYNTHETASE"/>
    <property type="match status" value="1"/>
</dbReference>
<dbReference type="Pfam" id="PF02272">
    <property type="entry name" value="DHHA1"/>
    <property type="match status" value="1"/>
</dbReference>
<dbReference type="Pfam" id="PF01411">
    <property type="entry name" value="tRNA-synt_2c"/>
    <property type="match status" value="1"/>
</dbReference>
<dbReference type="Pfam" id="PF07973">
    <property type="entry name" value="tRNA_SAD"/>
    <property type="match status" value="1"/>
</dbReference>
<dbReference type="PRINTS" id="PR00980">
    <property type="entry name" value="TRNASYNTHALA"/>
</dbReference>
<dbReference type="SMART" id="SM00863">
    <property type="entry name" value="tRNA_SAD"/>
    <property type="match status" value="1"/>
</dbReference>
<dbReference type="SUPFAM" id="SSF55681">
    <property type="entry name" value="Class II aaRS and biotin synthetases"/>
    <property type="match status" value="1"/>
</dbReference>
<dbReference type="SUPFAM" id="SSF101353">
    <property type="entry name" value="Putative anticodon-binding domain of alanyl-tRNA synthetase (AlaRS)"/>
    <property type="match status" value="1"/>
</dbReference>
<dbReference type="SUPFAM" id="SSF55186">
    <property type="entry name" value="ThrRS/AlaRS common domain"/>
    <property type="match status" value="1"/>
</dbReference>
<dbReference type="SUPFAM" id="SSF50447">
    <property type="entry name" value="Translation proteins"/>
    <property type="match status" value="1"/>
</dbReference>
<dbReference type="PROSITE" id="PS50860">
    <property type="entry name" value="AA_TRNA_LIGASE_II_ALA"/>
    <property type="match status" value="1"/>
</dbReference>
<sequence>MNGNEIRKRFVAFFQQHGHTHVESSSLVPRNDPTLLFTNAGMVQFKSLFLGEERRDYSRAVSAQKCVRAGGKHNDLENVGRTARHHTFFEMLGNFSFGDYFKEEAIRLGWRFVTEDLGIDAQRLLVTVYSEDDEAYAIWTQQIGLPADKVIRIPTTDNFWSMGDTGPCGPCSEIFYDYGDTVAGGPPGSEDEDGDRFVEIWNLVFMQYDRSSDGTLTPLPKPSIDTGAGLERLASVLQGKTNNYDTDLFQPLIKAAAALAGVDDTTCSAEQLVSLRVIADHIRSVSFLIADGVLPSNEGRGYVLRRIMRRGMRHGRLLGLEQPFMHKLVETLGALMGDTYPELTAQRKTLAMVIETEEKRFAATLGTGLKHLEEAVAGLRMGDVLDGKTLFTLYDTFGFPLDLTADILRDREIGVDQEGFSACMKEQRERARAAWSGSGEASLGALYHPLLERVGASEFLGYVHESASASVVALIKNGAEVESLTAGDEGSVVCNQTPFYGESGGQVGDRGVIQLANGARFTVTDTQKPLPDLIVHHGKMVTGTVHLGDHAELQVDGATRQAIRLHHSATHLMHHALRAVLGEHVKQAGSHVSAERLRLDFSHFQGMSEEELRAVEDRVNGAILSNVSQETAVMTPQEAVAAGAMALFGEKYGDEVRVVRIGDSMELCGGTHVSRSGDMGIFHILSESAVAAGVRRLEAVCGGRARAIFRGDQEALKAAAALLKTQPNKLAEGIERLLGKQKELEKSLEKLQSAQAGGMVEALLEQAVEVGGIKLLAVEVKGVDGKALREMVDQVKDKLGSGVILLALGGDKVSLVAGVTKDLAGKRVKAGDLMAFAAAMVGGKGGGRPDMAQGGGTEVAAIPTMLTAIPGWLQEQLG</sequence>
<comment type="function">
    <text evidence="1">Catalyzes the attachment of alanine to tRNA(Ala) in a two-step reaction: alanine is first activated by ATP to form Ala-AMP and then transferred to the acceptor end of tRNA(Ala). Also edits incorrectly charged Ser-tRNA(Ala) and Gly-tRNA(Ala) via its editing domain.</text>
</comment>
<comment type="catalytic activity">
    <reaction evidence="1">
        <text>tRNA(Ala) + L-alanine + ATP = L-alanyl-tRNA(Ala) + AMP + diphosphate</text>
        <dbReference type="Rhea" id="RHEA:12540"/>
        <dbReference type="Rhea" id="RHEA-COMP:9657"/>
        <dbReference type="Rhea" id="RHEA-COMP:9923"/>
        <dbReference type="ChEBI" id="CHEBI:30616"/>
        <dbReference type="ChEBI" id="CHEBI:33019"/>
        <dbReference type="ChEBI" id="CHEBI:57972"/>
        <dbReference type="ChEBI" id="CHEBI:78442"/>
        <dbReference type="ChEBI" id="CHEBI:78497"/>
        <dbReference type="ChEBI" id="CHEBI:456215"/>
        <dbReference type="EC" id="6.1.1.7"/>
    </reaction>
</comment>
<comment type="cofactor">
    <cofactor evidence="1">
        <name>Zn(2+)</name>
        <dbReference type="ChEBI" id="CHEBI:29105"/>
    </cofactor>
    <text evidence="1">Binds 1 zinc ion per subunit.</text>
</comment>
<comment type="subcellular location">
    <subcellularLocation>
        <location evidence="1">Cytoplasm</location>
    </subcellularLocation>
</comment>
<comment type="domain">
    <text evidence="1">Consists of three domains; the N-terminal catalytic domain, the editing domain and the C-terminal C-Ala domain. The editing domain removes incorrectly charged amino acids, while the C-Ala domain, along with tRNA(Ala), serves as a bridge to cooperatively bring together the editing and aminoacylation centers thus stimulating deacylation of misacylated tRNAs.</text>
</comment>
<comment type="similarity">
    <text evidence="1">Belongs to the class-II aminoacyl-tRNA synthetase family.</text>
</comment>
<keyword id="KW-0030">Aminoacyl-tRNA synthetase</keyword>
<keyword id="KW-0067">ATP-binding</keyword>
<keyword id="KW-0963">Cytoplasm</keyword>
<keyword id="KW-0436">Ligase</keyword>
<keyword id="KW-0479">Metal-binding</keyword>
<keyword id="KW-0547">Nucleotide-binding</keyword>
<keyword id="KW-0648">Protein biosynthesis</keyword>
<keyword id="KW-1185">Reference proteome</keyword>
<keyword id="KW-0694">RNA-binding</keyword>
<keyword id="KW-0820">tRNA-binding</keyword>
<keyword id="KW-0862">Zinc</keyword>
<feature type="chain" id="PRO_0000347664" description="Alanine--tRNA ligase">
    <location>
        <begin position="1"/>
        <end position="878"/>
    </location>
</feature>
<feature type="binding site" evidence="1">
    <location>
        <position position="567"/>
    </location>
    <ligand>
        <name>Zn(2+)</name>
        <dbReference type="ChEBI" id="CHEBI:29105"/>
    </ligand>
</feature>
<feature type="binding site" evidence="1">
    <location>
        <position position="571"/>
    </location>
    <ligand>
        <name>Zn(2+)</name>
        <dbReference type="ChEBI" id="CHEBI:29105"/>
    </ligand>
</feature>
<feature type="binding site" evidence="1">
    <location>
        <position position="668"/>
    </location>
    <ligand>
        <name>Zn(2+)</name>
        <dbReference type="ChEBI" id="CHEBI:29105"/>
    </ligand>
</feature>
<feature type="binding site" evidence="1">
    <location>
        <position position="672"/>
    </location>
    <ligand>
        <name>Zn(2+)</name>
        <dbReference type="ChEBI" id="CHEBI:29105"/>
    </ligand>
</feature>
<organism>
    <name type="scientific">Magnetococcus marinus (strain ATCC BAA-1437 / JCM 17883 / MC-1)</name>
    <dbReference type="NCBI Taxonomy" id="156889"/>
    <lineage>
        <taxon>Bacteria</taxon>
        <taxon>Pseudomonadati</taxon>
        <taxon>Pseudomonadota</taxon>
        <taxon>Alphaproteobacteria</taxon>
        <taxon>Magnetococcales</taxon>
        <taxon>Magnetococcaceae</taxon>
        <taxon>Magnetococcus</taxon>
    </lineage>
</organism>
<reference key="1">
    <citation type="journal article" date="2009" name="Appl. Environ. Microbiol.">
        <title>Complete genome sequence of the chemolithoautotrophic marine magnetotactic coccus strain MC-1.</title>
        <authorList>
            <person name="Schubbe S."/>
            <person name="Williams T.J."/>
            <person name="Xie G."/>
            <person name="Kiss H.E."/>
            <person name="Brettin T.S."/>
            <person name="Martinez D."/>
            <person name="Ross C.A."/>
            <person name="Schuler D."/>
            <person name="Cox B.L."/>
            <person name="Nealson K.H."/>
            <person name="Bazylinski D.A."/>
        </authorList>
    </citation>
    <scope>NUCLEOTIDE SEQUENCE [LARGE SCALE GENOMIC DNA]</scope>
    <source>
        <strain>ATCC BAA-1437 / JCM 17883 / MC-1</strain>
    </source>
</reference>
<protein>
    <recommendedName>
        <fullName evidence="1">Alanine--tRNA ligase</fullName>
        <ecNumber evidence="1">6.1.1.7</ecNumber>
    </recommendedName>
    <alternativeName>
        <fullName evidence="1">Alanyl-tRNA synthetase</fullName>
        <shortName evidence="1">AlaRS</shortName>
    </alternativeName>
</protein>